<keyword id="KW-0456">Lyase</keyword>
<keyword id="KW-0663">Pyridoxal phosphate</keyword>
<sequence length="330" mass="35048">MTLQHKLTQFPRLDLVGNATPLEKLSRLSDYLGREIYIKRDDVTPVALGGNKLRKLEFLAADALRQGADTLVTAGAIQSNHVRQTAAVAAKLGLHCVALLENPIGTEQANYLTNGNRLLLDLFNVDVVMCEALNDPNQQLAELATRVEAQGFRPYVVPIGGSNALGALGYVQCSLEIAAQAAGNVAFSSVVVASGSAGTHAGLAVGLQQLLPDAELIGVTVSRSADEQRPKVAQIQQALATSLGMTDPLAKITLWDSYFAPQYGMPNEEGIAAIKLLARLEGILLDPVYTGKAMAGLLDGIEQQKFCDKGPILFIHTGGAPALFAYHPQV</sequence>
<feature type="chain" id="PRO_1000064273" description="D-cysteine desulfhydrase">
    <location>
        <begin position="1"/>
        <end position="330"/>
    </location>
</feature>
<feature type="modified residue" description="N6-(pyridoxal phosphate)lysine" evidence="1">
    <location>
        <position position="52"/>
    </location>
</feature>
<evidence type="ECO:0000255" key="1">
    <source>
        <dbReference type="HAMAP-Rule" id="MF_01045"/>
    </source>
</evidence>
<dbReference type="EC" id="4.4.1.15" evidence="1"/>
<dbReference type="EMBL" id="BX936398">
    <property type="protein sequence ID" value="CAH20956.1"/>
    <property type="molecule type" value="Genomic_DNA"/>
</dbReference>
<dbReference type="RefSeq" id="WP_011192189.1">
    <property type="nucleotide sequence ID" value="NC_006155.1"/>
</dbReference>
<dbReference type="SMR" id="Q66BQ4"/>
<dbReference type="GeneID" id="49786206"/>
<dbReference type="KEGG" id="ypo:BZ17_784"/>
<dbReference type="KEGG" id="yps:YPTB1717"/>
<dbReference type="PATRIC" id="fig|273123.14.peg.830"/>
<dbReference type="Proteomes" id="UP000001011">
    <property type="component" value="Chromosome"/>
</dbReference>
<dbReference type="GO" id="GO:0019148">
    <property type="term" value="F:D-cysteine desulfhydrase activity"/>
    <property type="evidence" value="ECO:0007669"/>
    <property type="project" value="UniProtKB-UniRule"/>
</dbReference>
<dbReference type="GO" id="GO:0046416">
    <property type="term" value="P:D-amino acid metabolic process"/>
    <property type="evidence" value="ECO:0007669"/>
    <property type="project" value="UniProtKB-UniRule"/>
</dbReference>
<dbReference type="CDD" id="cd06449">
    <property type="entry name" value="ACCD"/>
    <property type="match status" value="1"/>
</dbReference>
<dbReference type="FunFam" id="3.40.50.1100:FF:000017">
    <property type="entry name" value="D-cysteine desulfhydrase"/>
    <property type="match status" value="1"/>
</dbReference>
<dbReference type="Gene3D" id="3.40.50.1100">
    <property type="match status" value="2"/>
</dbReference>
<dbReference type="HAMAP" id="MF_01045">
    <property type="entry name" value="D_Cys_desulfhydr"/>
    <property type="match status" value="1"/>
</dbReference>
<dbReference type="InterPro" id="IPR027278">
    <property type="entry name" value="ACCD_DCysDesulf"/>
</dbReference>
<dbReference type="InterPro" id="IPR005966">
    <property type="entry name" value="D-Cys_desShydrase"/>
</dbReference>
<dbReference type="InterPro" id="IPR023702">
    <property type="entry name" value="D_Cys_desulphydr_bac"/>
</dbReference>
<dbReference type="InterPro" id="IPR001926">
    <property type="entry name" value="TrpB-like_PALP"/>
</dbReference>
<dbReference type="InterPro" id="IPR036052">
    <property type="entry name" value="TrpB-like_PALP_sf"/>
</dbReference>
<dbReference type="NCBIfam" id="TIGR01275">
    <property type="entry name" value="ACC_deam_rel"/>
    <property type="match status" value="1"/>
</dbReference>
<dbReference type="NCBIfam" id="NF003030">
    <property type="entry name" value="PRK03910.1-3"/>
    <property type="match status" value="1"/>
</dbReference>
<dbReference type="NCBIfam" id="NF003032">
    <property type="entry name" value="PRK03910.1-5"/>
    <property type="match status" value="1"/>
</dbReference>
<dbReference type="PANTHER" id="PTHR43780">
    <property type="entry name" value="1-AMINOCYCLOPROPANE-1-CARBOXYLATE DEAMINASE-RELATED"/>
    <property type="match status" value="1"/>
</dbReference>
<dbReference type="PANTHER" id="PTHR43780:SF2">
    <property type="entry name" value="1-AMINOCYCLOPROPANE-1-CARBOXYLATE DEAMINASE-RELATED"/>
    <property type="match status" value="1"/>
</dbReference>
<dbReference type="Pfam" id="PF00291">
    <property type="entry name" value="PALP"/>
    <property type="match status" value="1"/>
</dbReference>
<dbReference type="PIRSF" id="PIRSF006278">
    <property type="entry name" value="ACCD_DCysDesulf"/>
    <property type="match status" value="1"/>
</dbReference>
<dbReference type="SUPFAM" id="SSF53686">
    <property type="entry name" value="Tryptophan synthase beta subunit-like PLP-dependent enzymes"/>
    <property type="match status" value="1"/>
</dbReference>
<name>DCYD_YERPS</name>
<reference key="1">
    <citation type="journal article" date="2004" name="Proc. Natl. Acad. Sci. U.S.A.">
        <title>Insights into the evolution of Yersinia pestis through whole-genome comparison with Yersinia pseudotuberculosis.</title>
        <authorList>
            <person name="Chain P.S.G."/>
            <person name="Carniel E."/>
            <person name="Larimer F.W."/>
            <person name="Lamerdin J."/>
            <person name="Stoutland P.O."/>
            <person name="Regala W.M."/>
            <person name="Georgescu A.M."/>
            <person name="Vergez L.M."/>
            <person name="Land M.L."/>
            <person name="Motin V.L."/>
            <person name="Brubaker R.R."/>
            <person name="Fowler J."/>
            <person name="Hinnebusch J."/>
            <person name="Marceau M."/>
            <person name="Medigue C."/>
            <person name="Simonet M."/>
            <person name="Chenal-Francisque V."/>
            <person name="Souza B."/>
            <person name="Dacheux D."/>
            <person name="Elliott J.M."/>
            <person name="Derbise A."/>
            <person name="Hauser L.J."/>
            <person name="Garcia E."/>
        </authorList>
    </citation>
    <scope>NUCLEOTIDE SEQUENCE [LARGE SCALE GENOMIC DNA]</scope>
    <source>
        <strain>IP32953</strain>
    </source>
</reference>
<accession>Q66BQ4</accession>
<comment type="function">
    <text evidence="1">Catalyzes the alpha,beta-elimination reaction of D-cysteine and of several D-cysteine derivatives. It could be a defense mechanism against D-cysteine.</text>
</comment>
<comment type="catalytic activity">
    <reaction evidence="1">
        <text>D-cysteine + H2O = hydrogen sulfide + pyruvate + NH4(+) + H(+)</text>
        <dbReference type="Rhea" id="RHEA:11268"/>
        <dbReference type="ChEBI" id="CHEBI:15361"/>
        <dbReference type="ChEBI" id="CHEBI:15377"/>
        <dbReference type="ChEBI" id="CHEBI:15378"/>
        <dbReference type="ChEBI" id="CHEBI:28938"/>
        <dbReference type="ChEBI" id="CHEBI:29919"/>
        <dbReference type="ChEBI" id="CHEBI:35236"/>
        <dbReference type="EC" id="4.4.1.15"/>
    </reaction>
</comment>
<comment type="cofactor">
    <cofactor evidence="1">
        <name>pyridoxal 5'-phosphate</name>
        <dbReference type="ChEBI" id="CHEBI:597326"/>
    </cofactor>
</comment>
<comment type="subunit">
    <text evidence="1">Homodimer.</text>
</comment>
<comment type="similarity">
    <text evidence="1">Belongs to the ACC deaminase/D-cysteine desulfhydrase family.</text>
</comment>
<gene>
    <name evidence="1" type="primary">dcyD</name>
    <name type="ordered locus">YPTB1717</name>
</gene>
<protein>
    <recommendedName>
        <fullName evidence="1">D-cysteine desulfhydrase</fullName>
        <ecNumber evidence="1">4.4.1.15</ecNumber>
    </recommendedName>
</protein>
<organism>
    <name type="scientific">Yersinia pseudotuberculosis serotype I (strain IP32953)</name>
    <dbReference type="NCBI Taxonomy" id="273123"/>
    <lineage>
        <taxon>Bacteria</taxon>
        <taxon>Pseudomonadati</taxon>
        <taxon>Pseudomonadota</taxon>
        <taxon>Gammaproteobacteria</taxon>
        <taxon>Enterobacterales</taxon>
        <taxon>Yersiniaceae</taxon>
        <taxon>Yersinia</taxon>
    </lineage>
</organism>
<proteinExistence type="inferred from homology"/>